<organism>
    <name type="scientific">Dictyostelium discoideum</name>
    <name type="common">Social amoeba</name>
    <dbReference type="NCBI Taxonomy" id="44689"/>
    <lineage>
        <taxon>Eukaryota</taxon>
        <taxon>Amoebozoa</taxon>
        <taxon>Evosea</taxon>
        <taxon>Eumycetozoa</taxon>
        <taxon>Dictyostelia</taxon>
        <taxon>Dictyosteliales</taxon>
        <taxon>Dictyosteliaceae</taxon>
        <taxon>Dictyostelium</taxon>
    </lineage>
</organism>
<name>ABCB3_DICDI</name>
<sequence>MDDGNENNENAQHDEYDEEEIEIPIDEIIIEEVDDDHLLEGEGEFQIITQPSNNNNNSNNNNFGDIYVSNPNTPRNNNNNNNNNNNNNNNNNNNNNNNSNNSFNNNKKNEVSIGISENTNENNNKNNNNNNNNNDDYNDGADERVKTEEEIKKEAENELNQSVPFLSLFRFADNTDKVLMFLGTIAAVINGAAMPTVSLVFGLVVDAFKPTQFNDDPNYDIYDTVRSISFYLLMLGGGVFVLSYLETTLWMIAGERQTSRIRREYLESTLRQEIGWFDTNKANELSSRINSDTVLFEEAIGEKVGRFIHFFSTFVAGFVIGFTKGWQLTLVITSVSPLLAIGGFFTAKMMTQMTKLGQEAYSRAGGVAEENIGSIRTVATFSGEKLAIDKYSNNLKDARTVGYKRSFFNGLGLGFVQFVILGTYALAFWYGSTLISNKVTNSVSDRPWTGGDVVSVFFAVIIGATSIGQASPCLALFAQGRGAAYKIFQVIDRQSKANPFSTRGIKPETLSGEIEFKDVGFHYPSRPDVPIFNGFNLKIKPGQTVGLVGDSGGGKSTIISLLERFYDPCQGEILLDGEDIRKFNVRGLRQKIGLVNQEPVLFATTISENIRYGKEGATQDEIEEAAKLANAHSFISQLPQGYNTLVGEKGVQMSGGQRQRIAIARAVIKNPNILLLDESTSALDAESTKLVQEALDVLMKGRTTIVIAHNLSTIRNADVIIYIKKGVAVERGTHDELMAKQGLYFDLVEKQSHQQMYNLLENGTRSRRSSTFSAEVNPLLDSFHVSKRSLRKNESESNKKDKEDSNNKKKKKSNKKKVEEVPMSRVVKYNRPELGLWCFGFLSAVGTGAVYPGFAMVFTEMLTIFQNPDPNYLTDHANFVALMFVALAVGAGISNFFQGFLFSVIGEKLTYRLRRDCFAAIMRQDVGWFDLPENSTGKLTSHLATDAALVQGMTSQRLGIVLQNILTMVGGLVIAFYSGWQLTLVIIACFPLVVITSKVQMQILAGFSSKDGCGPAGQVASEAISGIRTVASFTTEKQVVELYKKQQKGPSSEGIKKAHISGFAFGFTQLILFCVYCLSFWYGGKLVGSGVFGATDKEISDNCTPQTIPYLWKDYDTCERAQNTIYGFNSMTRVFFAIVMSAIGVGQASSFAPDLAKAKAAAVSVFKLLDTPSKIDPTTEDGDRIDIVGGDIEFKNLHFSYPTRPDNSVFRGFTLTLQSGTTTALVGDSGGGKSTCLSLLQRFYNPVVGEIFIDGHNIKNLNVRHLRHLFGLVGQEPTLFSGTIADNIRYGKHDATQEEIEEASKLSNSHSFIIDLPNGYNTELGEKYTQLSGGQKQRIAIARAIIRNPKILLLDESTSALDADSTKLVQEALENVMKGRTTIVIAHNLLTIQNADCIAYVRAGQIIERGTHDELLEAEGPYSQLWYNQQQK</sequence>
<feature type="chain" id="PRO_0000391324" description="ABC transporter B family member 3">
    <location>
        <begin position="1"/>
        <end position="1432"/>
    </location>
</feature>
<feature type="transmembrane region" description="Helical" evidence="3">
    <location>
        <begin position="185"/>
        <end position="205"/>
    </location>
</feature>
<feature type="transmembrane region" description="Helical" evidence="3">
    <location>
        <begin position="232"/>
        <end position="252"/>
    </location>
</feature>
<feature type="transmembrane region" description="Helical" evidence="3">
    <location>
        <begin position="303"/>
        <end position="323"/>
    </location>
</feature>
<feature type="transmembrane region" description="Helical" evidence="3">
    <location>
        <begin position="325"/>
        <end position="345"/>
    </location>
</feature>
<feature type="transmembrane region" description="Helical" evidence="3">
    <location>
        <begin position="410"/>
        <end position="430"/>
    </location>
</feature>
<feature type="transmembrane region" description="Helical" evidence="3">
    <location>
        <begin position="457"/>
        <end position="477"/>
    </location>
</feature>
<feature type="transmembrane region" description="Helical" evidence="3">
    <location>
        <begin position="838"/>
        <end position="858"/>
    </location>
</feature>
<feature type="transmembrane region" description="Helical" evidence="3">
    <location>
        <begin position="882"/>
        <end position="902"/>
    </location>
</feature>
<feature type="transmembrane region" description="Helical" evidence="3">
    <location>
        <begin position="968"/>
        <end position="988"/>
    </location>
</feature>
<feature type="transmembrane region" description="Helical" evidence="3">
    <location>
        <begin position="989"/>
        <end position="1009"/>
    </location>
</feature>
<feature type="transmembrane region" description="Helical" evidence="3">
    <location>
        <begin position="1060"/>
        <end position="1080"/>
    </location>
</feature>
<feature type="transmembrane region" description="Helical" evidence="3">
    <location>
        <begin position="1134"/>
        <end position="1154"/>
    </location>
</feature>
<feature type="domain" description="ABC transmembrane type-1 1" evidence="3">
    <location>
        <begin position="180"/>
        <end position="479"/>
    </location>
</feature>
<feature type="domain" description="ABC transporter 1" evidence="2">
    <location>
        <begin position="514"/>
        <end position="750"/>
    </location>
</feature>
<feature type="domain" description="ABC transmembrane type-1 2" evidence="3">
    <location>
        <begin position="837"/>
        <end position="1157"/>
    </location>
</feature>
<feature type="domain" description="ABC transporter 2" evidence="2">
    <location>
        <begin position="1192"/>
        <end position="1428"/>
    </location>
</feature>
<feature type="region of interest" description="Disordered" evidence="4">
    <location>
        <begin position="1"/>
        <end position="21"/>
    </location>
</feature>
<feature type="region of interest" description="Disordered" evidence="4">
    <location>
        <begin position="48"/>
        <end position="149"/>
    </location>
</feature>
<feature type="region of interest" description="Disordered" evidence="4">
    <location>
        <begin position="787"/>
        <end position="819"/>
    </location>
</feature>
<feature type="coiled-coil region" evidence="1">
    <location>
        <begin position="117"/>
        <end position="163"/>
    </location>
</feature>
<feature type="compositionally biased region" description="Low complexity" evidence="4">
    <location>
        <begin position="52"/>
        <end position="62"/>
    </location>
</feature>
<feature type="compositionally biased region" description="Low complexity" evidence="4">
    <location>
        <begin position="76"/>
        <end position="106"/>
    </location>
</feature>
<feature type="compositionally biased region" description="Low complexity" evidence="4">
    <location>
        <begin position="118"/>
        <end position="135"/>
    </location>
</feature>
<feature type="compositionally biased region" description="Basic and acidic residues" evidence="4">
    <location>
        <begin position="791"/>
        <end position="807"/>
    </location>
</feature>
<feature type="binding site" evidence="2">
    <location>
        <begin position="549"/>
        <end position="556"/>
    </location>
    <ligand>
        <name>ATP</name>
        <dbReference type="ChEBI" id="CHEBI:30616"/>
    </ligand>
</feature>
<feature type="binding site" evidence="2">
    <location>
        <begin position="1227"/>
        <end position="1234"/>
    </location>
    <ligand>
        <name>ATP</name>
        <dbReference type="ChEBI" id="CHEBI:30616"/>
    </ligand>
</feature>
<proteinExistence type="inferred from homology"/>
<evidence type="ECO:0000255" key="1"/>
<evidence type="ECO:0000255" key="2">
    <source>
        <dbReference type="PROSITE-ProRule" id="PRU00434"/>
    </source>
</evidence>
<evidence type="ECO:0000255" key="3">
    <source>
        <dbReference type="PROSITE-ProRule" id="PRU00441"/>
    </source>
</evidence>
<evidence type="ECO:0000256" key="4">
    <source>
        <dbReference type="SAM" id="MobiDB-lite"/>
    </source>
</evidence>
<evidence type="ECO:0000305" key="5"/>
<keyword id="KW-0067">ATP-binding</keyword>
<keyword id="KW-0175">Coiled coil</keyword>
<keyword id="KW-0472">Membrane</keyword>
<keyword id="KW-0547">Nucleotide-binding</keyword>
<keyword id="KW-1185">Reference proteome</keyword>
<keyword id="KW-0677">Repeat</keyword>
<keyword id="KW-0812">Transmembrane</keyword>
<keyword id="KW-1133">Transmembrane helix</keyword>
<keyword id="KW-0813">Transport</keyword>
<reference key="1">
    <citation type="journal article" date="2002" name="Eukaryot. Cell">
        <title>Evolutionary analyses of ABC transporters of Dictyostelium discoideum.</title>
        <authorList>
            <person name="Anjard C."/>
            <person name="Loomis W.F."/>
        </authorList>
    </citation>
    <scope>NUCLEOTIDE SEQUENCE [GENOMIC DNA]</scope>
    <scope>NOMENCLATURE</scope>
    <source>
        <strain>AX4</strain>
    </source>
</reference>
<reference key="2">
    <citation type="journal article" date="2005" name="Nature">
        <title>The genome of the social amoeba Dictyostelium discoideum.</title>
        <authorList>
            <person name="Eichinger L."/>
            <person name="Pachebat J.A."/>
            <person name="Gloeckner G."/>
            <person name="Rajandream M.A."/>
            <person name="Sucgang R."/>
            <person name="Berriman M."/>
            <person name="Song J."/>
            <person name="Olsen R."/>
            <person name="Szafranski K."/>
            <person name="Xu Q."/>
            <person name="Tunggal B."/>
            <person name="Kummerfeld S."/>
            <person name="Madera M."/>
            <person name="Konfortov B.A."/>
            <person name="Rivero F."/>
            <person name="Bankier A.T."/>
            <person name="Lehmann R."/>
            <person name="Hamlin N."/>
            <person name="Davies R."/>
            <person name="Gaudet P."/>
            <person name="Fey P."/>
            <person name="Pilcher K."/>
            <person name="Chen G."/>
            <person name="Saunders D."/>
            <person name="Sodergren E.J."/>
            <person name="Davis P."/>
            <person name="Kerhornou A."/>
            <person name="Nie X."/>
            <person name="Hall N."/>
            <person name="Anjard C."/>
            <person name="Hemphill L."/>
            <person name="Bason N."/>
            <person name="Farbrother P."/>
            <person name="Desany B."/>
            <person name="Just E."/>
            <person name="Morio T."/>
            <person name="Rost R."/>
            <person name="Churcher C.M."/>
            <person name="Cooper J."/>
            <person name="Haydock S."/>
            <person name="van Driessche N."/>
            <person name="Cronin A."/>
            <person name="Goodhead I."/>
            <person name="Muzny D.M."/>
            <person name="Mourier T."/>
            <person name="Pain A."/>
            <person name="Lu M."/>
            <person name="Harper D."/>
            <person name="Lindsay R."/>
            <person name="Hauser H."/>
            <person name="James K.D."/>
            <person name="Quiles M."/>
            <person name="Madan Babu M."/>
            <person name="Saito T."/>
            <person name="Buchrieser C."/>
            <person name="Wardroper A."/>
            <person name="Felder M."/>
            <person name="Thangavelu M."/>
            <person name="Johnson D."/>
            <person name="Knights A."/>
            <person name="Loulseged H."/>
            <person name="Mungall K.L."/>
            <person name="Oliver K."/>
            <person name="Price C."/>
            <person name="Quail M.A."/>
            <person name="Urushihara H."/>
            <person name="Hernandez J."/>
            <person name="Rabbinowitsch E."/>
            <person name="Steffen D."/>
            <person name="Sanders M."/>
            <person name="Ma J."/>
            <person name="Kohara Y."/>
            <person name="Sharp S."/>
            <person name="Simmonds M.N."/>
            <person name="Spiegler S."/>
            <person name="Tivey A."/>
            <person name="Sugano S."/>
            <person name="White B."/>
            <person name="Walker D."/>
            <person name="Woodward J.R."/>
            <person name="Winckler T."/>
            <person name="Tanaka Y."/>
            <person name="Shaulsky G."/>
            <person name="Schleicher M."/>
            <person name="Weinstock G.M."/>
            <person name="Rosenthal A."/>
            <person name="Cox E.C."/>
            <person name="Chisholm R.L."/>
            <person name="Gibbs R.A."/>
            <person name="Loomis W.F."/>
            <person name="Platzer M."/>
            <person name="Kay R.R."/>
            <person name="Williams J.G."/>
            <person name="Dear P.H."/>
            <person name="Noegel A.A."/>
            <person name="Barrell B.G."/>
            <person name="Kuspa A."/>
        </authorList>
    </citation>
    <scope>NUCLEOTIDE SEQUENCE [LARGE SCALE GENOMIC DNA]</scope>
    <source>
        <strain>AX4</strain>
    </source>
</reference>
<gene>
    <name type="primary">abcB3</name>
    <name type="ORF">DDB_G0291714</name>
</gene>
<dbReference type="EMBL" id="AF466306">
    <property type="protein sequence ID" value="AAL74250.1"/>
    <property type="molecule type" value="Genomic_DNA"/>
</dbReference>
<dbReference type="EMBL" id="AAFI02000182">
    <property type="protein sequence ID" value="EAL61553.1"/>
    <property type="molecule type" value="Genomic_DNA"/>
</dbReference>
<dbReference type="RefSeq" id="XP_629966.1">
    <property type="nucleotide sequence ID" value="XM_629964.1"/>
</dbReference>
<dbReference type="SMR" id="Q8T9W4"/>
<dbReference type="FunCoup" id="Q8T9W4">
    <property type="interactions" value="44"/>
</dbReference>
<dbReference type="STRING" id="44689.Q8T9W4"/>
<dbReference type="TCDB" id="3.A.1.201.23">
    <property type="family name" value="the atp-binding cassette (abc) superfamily"/>
</dbReference>
<dbReference type="PaxDb" id="44689-DDB0201629"/>
<dbReference type="EnsemblProtists" id="EAL61553">
    <property type="protein sequence ID" value="EAL61553"/>
    <property type="gene ID" value="DDB_G0291714"/>
</dbReference>
<dbReference type="GeneID" id="8628296"/>
<dbReference type="KEGG" id="ddi:DDB_G0291714"/>
<dbReference type="dictyBase" id="DDB_G0291714">
    <property type="gene designation" value="abcB3"/>
</dbReference>
<dbReference type="VEuPathDB" id="AmoebaDB:DDB_G0291714"/>
<dbReference type="eggNOG" id="KOG0055">
    <property type="taxonomic scope" value="Eukaryota"/>
</dbReference>
<dbReference type="HOGENOM" id="CLU_000604_17_8_1"/>
<dbReference type="InParanoid" id="Q8T9W4"/>
<dbReference type="OMA" id="IGMAAPY"/>
<dbReference type="PhylomeDB" id="Q8T9W4"/>
<dbReference type="Reactome" id="R-DDI-1369007">
    <property type="pathway name" value="Mitochondrial ABC transporters"/>
</dbReference>
<dbReference type="Reactome" id="R-DDI-159418">
    <property type="pathway name" value="Recycling of bile acids and salts"/>
</dbReference>
<dbReference type="Reactome" id="R-DDI-193368">
    <property type="pathway name" value="Synthesis of bile acids and bile salts via 7alpha-hydroxycholesterol"/>
</dbReference>
<dbReference type="Reactome" id="R-DDI-382556">
    <property type="pathway name" value="ABC-family proteins mediated transport"/>
</dbReference>
<dbReference type="Reactome" id="R-DDI-9754706">
    <property type="pathway name" value="Atorvastatin ADME"/>
</dbReference>
<dbReference type="Reactome" id="R-DDI-9757110">
    <property type="pathway name" value="Prednisone ADME"/>
</dbReference>
<dbReference type="PRO" id="PR:Q8T9W4"/>
<dbReference type="Proteomes" id="UP000002195">
    <property type="component" value="Chromosome 6"/>
</dbReference>
<dbReference type="GO" id="GO:0016020">
    <property type="term" value="C:membrane"/>
    <property type="evidence" value="ECO:0000318"/>
    <property type="project" value="GO_Central"/>
</dbReference>
<dbReference type="GO" id="GO:0140359">
    <property type="term" value="F:ABC-type transporter activity"/>
    <property type="evidence" value="ECO:0007669"/>
    <property type="project" value="InterPro"/>
</dbReference>
<dbReference type="GO" id="GO:0005524">
    <property type="term" value="F:ATP binding"/>
    <property type="evidence" value="ECO:0007669"/>
    <property type="project" value="UniProtKB-KW"/>
</dbReference>
<dbReference type="GO" id="GO:0016887">
    <property type="term" value="F:ATP hydrolysis activity"/>
    <property type="evidence" value="ECO:0007669"/>
    <property type="project" value="InterPro"/>
</dbReference>
<dbReference type="GO" id="GO:0042626">
    <property type="term" value="F:ATPase-coupled transmembrane transporter activity"/>
    <property type="evidence" value="ECO:0000318"/>
    <property type="project" value="GO_Central"/>
</dbReference>
<dbReference type="GO" id="GO:0070730">
    <property type="term" value="P:cAMP transport"/>
    <property type="evidence" value="ECO:0000315"/>
    <property type="project" value="dictyBase"/>
</dbReference>
<dbReference type="GO" id="GO:0030587">
    <property type="term" value="P:sorocarp development"/>
    <property type="evidence" value="ECO:0000315"/>
    <property type="project" value="dictyBase"/>
</dbReference>
<dbReference type="GO" id="GO:0055085">
    <property type="term" value="P:transmembrane transport"/>
    <property type="evidence" value="ECO:0000318"/>
    <property type="project" value="GO_Central"/>
</dbReference>
<dbReference type="CDD" id="cd18577">
    <property type="entry name" value="ABC_6TM_Pgp_ABCB1_D1_like"/>
    <property type="match status" value="1"/>
</dbReference>
<dbReference type="CDD" id="cd18578">
    <property type="entry name" value="ABC_6TM_Pgp_ABCB1_D2_like"/>
    <property type="match status" value="1"/>
</dbReference>
<dbReference type="CDD" id="cd03249">
    <property type="entry name" value="ABC_MTABC3_MDL1_MDL2"/>
    <property type="match status" value="2"/>
</dbReference>
<dbReference type="FunFam" id="1.20.1560.10:FF:000009">
    <property type="entry name" value="ABC transporter B family member 1"/>
    <property type="match status" value="1"/>
</dbReference>
<dbReference type="FunFam" id="3.40.50.300:FF:000251">
    <property type="entry name" value="ABC transporter B family member 19"/>
    <property type="match status" value="1"/>
</dbReference>
<dbReference type="FunFam" id="3.40.50.300:FF:000916">
    <property type="entry name" value="ABC transporter B family member 9"/>
    <property type="match status" value="1"/>
</dbReference>
<dbReference type="FunFam" id="1.20.1560.10:FF:000163">
    <property type="entry name" value="ABC transporter B family protein"/>
    <property type="match status" value="1"/>
</dbReference>
<dbReference type="FunFam" id="1.20.1560.10:FF:000018">
    <property type="entry name" value="ATP-binding cassette subfamily B member 11"/>
    <property type="match status" value="1"/>
</dbReference>
<dbReference type="Gene3D" id="1.20.1560.10">
    <property type="entry name" value="ABC transporter type 1, transmembrane domain"/>
    <property type="match status" value="2"/>
</dbReference>
<dbReference type="Gene3D" id="3.40.50.300">
    <property type="entry name" value="P-loop containing nucleotide triphosphate hydrolases"/>
    <property type="match status" value="2"/>
</dbReference>
<dbReference type="InterPro" id="IPR003593">
    <property type="entry name" value="AAA+_ATPase"/>
</dbReference>
<dbReference type="InterPro" id="IPR011527">
    <property type="entry name" value="ABC1_TM_dom"/>
</dbReference>
<dbReference type="InterPro" id="IPR036640">
    <property type="entry name" value="ABC1_TM_sf"/>
</dbReference>
<dbReference type="InterPro" id="IPR003439">
    <property type="entry name" value="ABC_transporter-like_ATP-bd"/>
</dbReference>
<dbReference type="InterPro" id="IPR017871">
    <property type="entry name" value="ABC_transporter-like_CS"/>
</dbReference>
<dbReference type="InterPro" id="IPR027417">
    <property type="entry name" value="P-loop_NTPase"/>
</dbReference>
<dbReference type="InterPro" id="IPR039421">
    <property type="entry name" value="Type_1_exporter"/>
</dbReference>
<dbReference type="PANTHER" id="PTHR43394">
    <property type="entry name" value="ATP-DEPENDENT PERMEASE MDL1, MITOCHONDRIAL"/>
    <property type="match status" value="1"/>
</dbReference>
<dbReference type="PANTHER" id="PTHR43394:SF27">
    <property type="entry name" value="ATP-DEPENDENT TRANSLOCASE ABCB1-LIKE"/>
    <property type="match status" value="1"/>
</dbReference>
<dbReference type="Pfam" id="PF00664">
    <property type="entry name" value="ABC_membrane"/>
    <property type="match status" value="2"/>
</dbReference>
<dbReference type="Pfam" id="PF00005">
    <property type="entry name" value="ABC_tran"/>
    <property type="match status" value="2"/>
</dbReference>
<dbReference type="SMART" id="SM00382">
    <property type="entry name" value="AAA"/>
    <property type="match status" value="2"/>
</dbReference>
<dbReference type="SUPFAM" id="SSF90123">
    <property type="entry name" value="ABC transporter transmembrane region"/>
    <property type="match status" value="2"/>
</dbReference>
<dbReference type="SUPFAM" id="SSF52540">
    <property type="entry name" value="P-loop containing nucleoside triphosphate hydrolases"/>
    <property type="match status" value="2"/>
</dbReference>
<dbReference type="PROSITE" id="PS50929">
    <property type="entry name" value="ABC_TM1F"/>
    <property type="match status" value="2"/>
</dbReference>
<dbReference type="PROSITE" id="PS00211">
    <property type="entry name" value="ABC_TRANSPORTER_1"/>
    <property type="match status" value="2"/>
</dbReference>
<dbReference type="PROSITE" id="PS50893">
    <property type="entry name" value="ABC_TRANSPORTER_2"/>
    <property type="match status" value="2"/>
</dbReference>
<protein>
    <recommendedName>
        <fullName>ABC transporter B family member 3</fullName>
    </recommendedName>
    <alternativeName>
        <fullName>ABC transporter ABCB.3</fullName>
    </alternativeName>
</protein>
<accession>Q8T9W4</accession>
<accession>Q54E96</accession>
<comment type="subcellular location">
    <subcellularLocation>
        <location evidence="3">Membrane</location>
        <topology evidence="3">Multi-pass membrane protein</topology>
    </subcellularLocation>
</comment>
<comment type="similarity">
    <text evidence="5">Belongs to the ABC transporter superfamily. ABCB family. Multidrug resistance exporter (TC 3.A.1.201) subfamily.</text>
</comment>